<evidence type="ECO:0000250" key="1"/>
<evidence type="ECO:0000305" key="2"/>
<proteinExistence type="inferred from homology"/>
<protein>
    <recommendedName>
        <fullName>Suppressor of hydroxyurea sensitivity protein 2</fullName>
    </recommendedName>
</protein>
<dbReference type="EMBL" id="AEHH01000010">
    <property type="protein sequence ID" value="EGA59362.1"/>
    <property type="molecule type" value="Genomic_DNA"/>
</dbReference>
<dbReference type="HOGENOM" id="CLU_1115918_0_0_1"/>
<dbReference type="OrthoDB" id="4066852at2759"/>
<dbReference type="GO" id="GO:0005634">
    <property type="term" value="C:nucleus"/>
    <property type="evidence" value="ECO:0007669"/>
    <property type="project" value="UniProtKB-SubCell"/>
</dbReference>
<dbReference type="GO" id="GO:0006310">
    <property type="term" value="P:DNA recombination"/>
    <property type="evidence" value="ECO:0007669"/>
    <property type="project" value="UniProtKB-KW"/>
</dbReference>
<dbReference type="GO" id="GO:0006281">
    <property type="term" value="P:DNA repair"/>
    <property type="evidence" value="ECO:0007669"/>
    <property type="project" value="UniProtKB-KW"/>
</dbReference>
<name>SHU2_YEASB</name>
<sequence>MSKDVIEYSKLFAKLVNTNDDTKLDDTIASFLXYMFPRELFIRAISLLESSDMFIYILDRVHNKEGNEHTSLIDVLVDEFYKGSSNSLLEYRLIVKDTNDGAPXILVDIAHWFCSCEEFCKYFHEALEKTDEKEELHDVLINEVDDHLQFSDDRFAQLDPHSLSKQWYFKFDKICCSHLLAFSILLRSSINVLKFFTVNSNKVFVIAIDNIDEWLNLHINIVE</sequence>
<accession>E7Q257</accession>
<comment type="function">
    <text evidence="1">Plays a role in a RAD51/RAD54-dependent homologous recombination repair (HRR) pathway to repair MMS-induced lesions during S-phase. Required for error-free repair of spontaneous and induced DNA lesions to protect the genome from mutation (By similarity).</text>
</comment>
<comment type="subunit">
    <text evidence="1">Component of the SHU complex composed of at least CSM2, PSY3, SHU1 and SHU2.</text>
</comment>
<comment type="subcellular location">
    <subcellularLocation>
        <location evidence="1">Nucleus</location>
    </subcellularLocation>
</comment>
<comment type="similarity">
    <text evidence="2">Belongs to the SHU2 family.</text>
</comment>
<feature type="chain" id="PRO_0000409742" description="Suppressor of hydroxyurea sensitivity protein 2">
    <location>
        <begin position="1"/>
        <end position="223"/>
    </location>
</feature>
<organism>
    <name type="scientific">Saccharomyces cerevisiae (strain FostersB)</name>
    <name type="common">Baker's yeast</name>
    <dbReference type="NCBI Taxonomy" id="764102"/>
    <lineage>
        <taxon>Eukaryota</taxon>
        <taxon>Fungi</taxon>
        <taxon>Dikarya</taxon>
        <taxon>Ascomycota</taxon>
        <taxon>Saccharomycotina</taxon>
        <taxon>Saccharomycetes</taxon>
        <taxon>Saccharomycetales</taxon>
        <taxon>Saccharomycetaceae</taxon>
        <taxon>Saccharomyces</taxon>
    </lineage>
</organism>
<reference key="1">
    <citation type="journal article" date="2011" name="PLoS Genet.">
        <title>Whole-genome comparison reveals novel genetic elements that characterize the genome of industrial strains of Saccharomyces cerevisiae.</title>
        <authorList>
            <person name="Borneman A.R."/>
            <person name="Desany B.A."/>
            <person name="Riches D."/>
            <person name="Affourtit J.P."/>
            <person name="Forgan A.H."/>
            <person name="Pretorius I.S."/>
            <person name="Egholm M."/>
            <person name="Chambers P.J."/>
        </authorList>
    </citation>
    <scope>NUCLEOTIDE SEQUENCE [LARGE SCALE GENOMIC DNA]</scope>
    <source>
        <strain>FostersB</strain>
    </source>
</reference>
<gene>
    <name type="primary">SHU2</name>
    <name type="ORF">FOSTERSB_0800</name>
</gene>
<keyword id="KW-0227">DNA damage</keyword>
<keyword id="KW-0233">DNA recombination</keyword>
<keyword id="KW-0234">DNA repair</keyword>
<keyword id="KW-0539">Nucleus</keyword>